<feature type="chain" id="PRO_1000120987" description="Large ribosomal subunit protein uL10">
    <location>
        <begin position="1"/>
        <end position="172"/>
    </location>
</feature>
<keyword id="KW-0687">Ribonucleoprotein</keyword>
<keyword id="KW-0689">Ribosomal protein</keyword>
<keyword id="KW-0694">RNA-binding</keyword>
<keyword id="KW-0699">rRNA-binding</keyword>
<proteinExistence type="inferred from homology"/>
<organism>
    <name type="scientific">Methylobacterium radiotolerans (strain ATCC 27329 / DSM 1819 / JCM 2831 / NBRC 15690 / NCIMB 10815 / 0-1)</name>
    <dbReference type="NCBI Taxonomy" id="426355"/>
    <lineage>
        <taxon>Bacteria</taxon>
        <taxon>Pseudomonadati</taxon>
        <taxon>Pseudomonadota</taxon>
        <taxon>Alphaproteobacteria</taxon>
        <taxon>Hyphomicrobiales</taxon>
        <taxon>Methylobacteriaceae</taxon>
        <taxon>Methylobacterium</taxon>
    </lineage>
</organism>
<name>RL10_METRJ</name>
<evidence type="ECO:0000255" key="1">
    <source>
        <dbReference type="HAMAP-Rule" id="MF_00362"/>
    </source>
</evidence>
<evidence type="ECO:0000305" key="2"/>
<gene>
    <name evidence="1" type="primary">rplJ</name>
    <name type="ordered locus">Mrad2831_3841</name>
</gene>
<dbReference type="EMBL" id="CP001001">
    <property type="protein sequence ID" value="ACB25816.1"/>
    <property type="molecule type" value="Genomic_DNA"/>
</dbReference>
<dbReference type="RefSeq" id="WP_012320774.1">
    <property type="nucleotide sequence ID" value="NC_010505.1"/>
</dbReference>
<dbReference type="SMR" id="B1LY45"/>
<dbReference type="STRING" id="426355.Mrad2831_3841"/>
<dbReference type="GeneID" id="6139895"/>
<dbReference type="KEGG" id="mrd:Mrad2831_3841"/>
<dbReference type="eggNOG" id="COG0244">
    <property type="taxonomic scope" value="Bacteria"/>
</dbReference>
<dbReference type="HOGENOM" id="CLU_092227_0_0_5"/>
<dbReference type="OrthoDB" id="9791972at2"/>
<dbReference type="Proteomes" id="UP000006589">
    <property type="component" value="Chromosome"/>
</dbReference>
<dbReference type="GO" id="GO:0015934">
    <property type="term" value="C:large ribosomal subunit"/>
    <property type="evidence" value="ECO:0007669"/>
    <property type="project" value="InterPro"/>
</dbReference>
<dbReference type="GO" id="GO:0070180">
    <property type="term" value="F:large ribosomal subunit rRNA binding"/>
    <property type="evidence" value="ECO:0007669"/>
    <property type="project" value="UniProtKB-UniRule"/>
</dbReference>
<dbReference type="GO" id="GO:0003735">
    <property type="term" value="F:structural constituent of ribosome"/>
    <property type="evidence" value="ECO:0007669"/>
    <property type="project" value="InterPro"/>
</dbReference>
<dbReference type="GO" id="GO:0006412">
    <property type="term" value="P:translation"/>
    <property type="evidence" value="ECO:0007669"/>
    <property type="project" value="UniProtKB-UniRule"/>
</dbReference>
<dbReference type="CDD" id="cd05797">
    <property type="entry name" value="Ribosomal_L10"/>
    <property type="match status" value="1"/>
</dbReference>
<dbReference type="Gene3D" id="3.30.70.1730">
    <property type="match status" value="1"/>
</dbReference>
<dbReference type="Gene3D" id="6.10.250.290">
    <property type="match status" value="1"/>
</dbReference>
<dbReference type="HAMAP" id="MF_00362">
    <property type="entry name" value="Ribosomal_uL10"/>
    <property type="match status" value="1"/>
</dbReference>
<dbReference type="InterPro" id="IPR001790">
    <property type="entry name" value="Ribosomal_uL10"/>
</dbReference>
<dbReference type="InterPro" id="IPR043141">
    <property type="entry name" value="Ribosomal_uL10-like_sf"/>
</dbReference>
<dbReference type="InterPro" id="IPR022973">
    <property type="entry name" value="Ribosomal_uL10_bac"/>
</dbReference>
<dbReference type="InterPro" id="IPR047865">
    <property type="entry name" value="Ribosomal_uL10_bac_type"/>
</dbReference>
<dbReference type="InterPro" id="IPR002363">
    <property type="entry name" value="Ribosomal_uL10_CS_bac"/>
</dbReference>
<dbReference type="NCBIfam" id="NF000955">
    <property type="entry name" value="PRK00099.1-1"/>
    <property type="match status" value="1"/>
</dbReference>
<dbReference type="PANTHER" id="PTHR11560">
    <property type="entry name" value="39S RIBOSOMAL PROTEIN L10, MITOCHONDRIAL"/>
    <property type="match status" value="1"/>
</dbReference>
<dbReference type="Pfam" id="PF00466">
    <property type="entry name" value="Ribosomal_L10"/>
    <property type="match status" value="1"/>
</dbReference>
<dbReference type="SUPFAM" id="SSF160369">
    <property type="entry name" value="Ribosomal protein L10-like"/>
    <property type="match status" value="1"/>
</dbReference>
<dbReference type="PROSITE" id="PS01109">
    <property type="entry name" value="RIBOSOMAL_L10"/>
    <property type="match status" value="1"/>
</dbReference>
<reference key="1">
    <citation type="submission" date="2008-03" db="EMBL/GenBank/DDBJ databases">
        <title>Complete sequence of chromosome of Methylobacterium radiotolerans JCM 2831.</title>
        <authorList>
            <consortium name="US DOE Joint Genome Institute"/>
            <person name="Copeland A."/>
            <person name="Lucas S."/>
            <person name="Lapidus A."/>
            <person name="Glavina del Rio T."/>
            <person name="Dalin E."/>
            <person name="Tice H."/>
            <person name="Bruce D."/>
            <person name="Goodwin L."/>
            <person name="Pitluck S."/>
            <person name="Kiss H."/>
            <person name="Brettin T."/>
            <person name="Detter J.C."/>
            <person name="Han C."/>
            <person name="Kuske C.R."/>
            <person name="Schmutz J."/>
            <person name="Larimer F."/>
            <person name="Land M."/>
            <person name="Hauser L."/>
            <person name="Kyrpides N."/>
            <person name="Mikhailova N."/>
            <person name="Marx C.J."/>
            <person name="Richardson P."/>
        </authorList>
    </citation>
    <scope>NUCLEOTIDE SEQUENCE [LARGE SCALE GENOMIC DNA]</scope>
    <source>
        <strain>ATCC 27329 / DSM 1819 / JCM 2831 / NBRC 15690 / NCIMB 10815 / 0-1</strain>
    </source>
</reference>
<protein>
    <recommendedName>
        <fullName evidence="1">Large ribosomal subunit protein uL10</fullName>
    </recommendedName>
    <alternativeName>
        <fullName evidence="2">50S ribosomal protein L10</fullName>
    </alternativeName>
</protein>
<accession>B1LY45</accession>
<sequence>MDRTAKADLVSTLNGVFNESAVVVVAHYKGLTVADMQKLRAQMKQAGATVKVAKNSLAGIALDGTDVASIKPLLKGPTLLAYSGDPVAAAKVAVDFAKANDKLVILGGAMGKTALNPDGVKALASLPSLDELRAKIVGLVQAPATKIAQVVNAPASKLARVFGAYAKKDEAA</sequence>
<comment type="function">
    <text evidence="1">Forms part of the ribosomal stalk, playing a central role in the interaction of the ribosome with GTP-bound translation factors.</text>
</comment>
<comment type="subunit">
    <text evidence="1">Part of the ribosomal stalk of the 50S ribosomal subunit. The N-terminus interacts with L11 and the large rRNA to form the base of the stalk. The C-terminus forms an elongated spine to which L12 dimers bind in a sequential fashion forming a multimeric L10(L12)X complex.</text>
</comment>
<comment type="similarity">
    <text evidence="1">Belongs to the universal ribosomal protein uL10 family.</text>
</comment>